<keyword id="KW-0072">Autophagy</keyword>
<keyword id="KW-0159">Chromosome partition</keyword>
<keyword id="KW-0963">Cytoplasm</keyword>
<keyword id="KW-0206">Cytoskeleton</keyword>
<keyword id="KW-0415">Karyogamy</keyword>
<keyword id="KW-0493">Microtubule</keyword>
<keyword id="KW-0653">Protein transport</keyword>
<keyword id="KW-1185">Reference proteome</keyword>
<keyword id="KW-0813">Transport</keyword>
<evidence type="ECO:0000250" key="1"/>
<evidence type="ECO:0000256" key="2">
    <source>
        <dbReference type="SAM" id="MobiDB-lite"/>
    </source>
</evidence>
<evidence type="ECO:0000305" key="3"/>
<sequence length="182" mass="20611">MEPLSLTVYDRNIWHLFKKEEGAPQAMFPTNIKYIFEDDDDVADVDDLVFQQQQPDSELENVIIVEIDGAGQLENVELISDQYEMLSYRRERPVSLASQRSLSWLTSGNDTGGDAGKKSGDISDPAAGPDVPREAPLSIELELVSEFKDYRNLNLEDLKLDELTRIFCIQNKQLQMISDALN</sequence>
<name>CIS1_CANGA</name>
<feature type="chain" id="PRO_0000076209" description="Autophagy-related protein 31">
    <location>
        <begin position="1"/>
        <end position="182"/>
    </location>
</feature>
<feature type="region of interest" description="Disordered" evidence="2">
    <location>
        <begin position="105"/>
        <end position="134"/>
    </location>
</feature>
<organism>
    <name type="scientific">Candida glabrata (strain ATCC 2001 / BCRC 20586 / JCM 3761 / NBRC 0622 / NRRL Y-65 / CBS 138)</name>
    <name type="common">Yeast</name>
    <name type="synonym">Nakaseomyces glabratus</name>
    <dbReference type="NCBI Taxonomy" id="284593"/>
    <lineage>
        <taxon>Eukaryota</taxon>
        <taxon>Fungi</taxon>
        <taxon>Dikarya</taxon>
        <taxon>Ascomycota</taxon>
        <taxon>Saccharomycotina</taxon>
        <taxon>Saccharomycetes</taxon>
        <taxon>Saccharomycetales</taxon>
        <taxon>Saccharomycetaceae</taxon>
        <taxon>Nakaseomyces</taxon>
    </lineage>
</organism>
<comment type="function">
    <text evidence="1">Plays a role in starvation-induced autophagy. Involved in mitophagy. Functions with ATG17 and ATG29 at the preautophagosomal structure (PAS) in order to form normal autophagosomes under starvation conditions. May be involved in microtubule function, such as chromosome segregation and karyogamy (By similarity).</text>
</comment>
<comment type="subcellular location">
    <subcellularLocation>
        <location evidence="3">Cytoplasm</location>
        <location evidence="3">Cytoskeleton</location>
    </subcellularLocation>
    <subcellularLocation>
        <location evidence="1">Preautophagosomal structure</location>
    </subcellularLocation>
</comment>
<reference key="1">
    <citation type="journal article" date="2004" name="Nature">
        <title>Genome evolution in yeasts.</title>
        <authorList>
            <person name="Dujon B."/>
            <person name="Sherman D."/>
            <person name="Fischer G."/>
            <person name="Durrens P."/>
            <person name="Casaregola S."/>
            <person name="Lafontaine I."/>
            <person name="de Montigny J."/>
            <person name="Marck C."/>
            <person name="Neuveglise C."/>
            <person name="Talla E."/>
            <person name="Goffard N."/>
            <person name="Frangeul L."/>
            <person name="Aigle M."/>
            <person name="Anthouard V."/>
            <person name="Babour A."/>
            <person name="Barbe V."/>
            <person name="Barnay S."/>
            <person name="Blanchin S."/>
            <person name="Beckerich J.-M."/>
            <person name="Beyne E."/>
            <person name="Bleykasten C."/>
            <person name="Boisrame A."/>
            <person name="Boyer J."/>
            <person name="Cattolico L."/>
            <person name="Confanioleri F."/>
            <person name="de Daruvar A."/>
            <person name="Despons L."/>
            <person name="Fabre E."/>
            <person name="Fairhead C."/>
            <person name="Ferry-Dumazet H."/>
            <person name="Groppi A."/>
            <person name="Hantraye F."/>
            <person name="Hennequin C."/>
            <person name="Jauniaux N."/>
            <person name="Joyet P."/>
            <person name="Kachouri R."/>
            <person name="Kerrest A."/>
            <person name="Koszul R."/>
            <person name="Lemaire M."/>
            <person name="Lesur I."/>
            <person name="Ma L."/>
            <person name="Muller H."/>
            <person name="Nicaud J.-M."/>
            <person name="Nikolski M."/>
            <person name="Oztas S."/>
            <person name="Ozier-Kalogeropoulos O."/>
            <person name="Pellenz S."/>
            <person name="Potier S."/>
            <person name="Richard G.-F."/>
            <person name="Straub M.-L."/>
            <person name="Suleau A."/>
            <person name="Swennen D."/>
            <person name="Tekaia F."/>
            <person name="Wesolowski-Louvel M."/>
            <person name="Westhof E."/>
            <person name="Wirth B."/>
            <person name="Zeniou-Meyer M."/>
            <person name="Zivanovic Y."/>
            <person name="Bolotin-Fukuhara M."/>
            <person name="Thierry A."/>
            <person name="Bouchier C."/>
            <person name="Caudron B."/>
            <person name="Scarpelli C."/>
            <person name="Gaillardin C."/>
            <person name="Weissenbach J."/>
            <person name="Wincker P."/>
            <person name="Souciet J.-L."/>
        </authorList>
    </citation>
    <scope>NUCLEOTIDE SEQUENCE [LARGE SCALE GENOMIC DNA]</scope>
    <source>
        <strain>ATCC 2001 / BCRC 20586 / JCM 3761 / NBRC 0622 / NRRL Y-65 / CBS 138</strain>
    </source>
</reference>
<protein>
    <recommendedName>
        <fullName>Autophagy-related protein 31</fullName>
    </recommendedName>
    <alternativeName>
        <fullName>Protein CIS1</fullName>
    </alternativeName>
</protein>
<accession>Q6FM20</accession>
<proteinExistence type="inferred from homology"/>
<dbReference type="EMBL" id="CR380957">
    <property type="protein sequence ID" value="CAG61687.1"/>
    <property type="molecule type" value="Genomic_DNA"/>
</dbReference>
<dbReference type="RefSeq" id="XP_448724.1">
    <property type="nucleotide sequence ID" value="XM_448724.1"/>
</dbReference>
<dbReference type="SMR" id="Q6FM20"/>
<dbReference type="FunCoup" id="Q6FM20">
    <property type="interactions" value="133"/>
</dbReference>
<dbReference type="STRING" id="284593.Q6FM20"/>
<dbReference type="EnsemblFungi" id="CAGL0K11682g-T">
    <property type="protein sequence ID" value="CAGL0K11682g-T-p1"/>
    <property type="gene ID" value="CAGL0K11682g"/>
</dbReference>
<dbReference type="KEGG" id="cgr:2890527"/>
<dbReference type="CGD" id="CAL0134281">
    <property type="gene designation" value="CAGL0K11682g"/>
</dbReference>
<dbReference type="VEuPathDB" id="FungiDB:CAGL0K11682g"/>
<dbReference type="eggNOG" id="ENOG502SA9V">
    <property type="taxonomic scope" value="Eukaryota"/>
</dbReference>
<dbReference type="HOGENOM" id="CLU_138108_0_0_1"/>
<dbReference type="InParanoid" id="Q6FM20"/>
<dbReference type="Proteomes" id="UP000002428">
    <property type="component" value="Chromosome K"/>
</dbReference>
<dbReference type="GO" id="GO:1990316">
    <property type="term" value="C:Atg1/ULK1 kinase complex"/>
    <property type="evidence" value="ECO:0007669"/>
    <property type="project" value="EnsemblFungi"/>
</dbReference>
<dbReference type="GO" id="GO:0005874">
    <property type="term" value="C:microtubule"/>
    <property type="evidence" value="ECO:0007669"/>
    <property type="project" value="UniProtKB-KW"/>
</dbReference>
<dbReference type="GO" id="GO:0000407">
    <property type="term" value="C:phagophore assembly site"/>
    <property type="evidence" value="ECO:0007669"/>
    <property type="project" value="UniProtKB-SubCell"/>
</dbReference>
<dbReference type="GO" id="GO:0000422">
    <property type="term" value="P:autophagy of mitochondrion"/>
    <property type="evidence" value="ECO:0007669"/>
    <property type="project" value="EnsemblFungi"/>
</dbReference>
<dbReference type="GO" id="GO:0007059">
    <property type="term" value="P:chromosome segregation"/>
    <property type="evidence" value="ECO:0007669"/>
    <property type="project" value="UniProtKB-KW"/>
</dbReference>
<dbReference type="GO" id="GO:0000741">
    <property type="term" value="P:karyogamy"/>
    <property type="evidence" value="ECO:0007669"/>
    <property type="project" value="UniProtKB-KW"/>
</dbReference>
<dbReference type="GO" id="GO:0034727">
    <property type="term" value="P:piecemeal microautophagy of the nucleus"/>
    <property type="evidence" value="ECO:0007669"/>
    <property type="project" value="EnsemblFungi"/>
</dbReference>
<dbReference type="GO" id="GO:0015031">
    <property type="term" value="P:protein transport"/>
    <property type="evidence" value="ECO:0007669"/>
    <property type="project" value="UniProtKB-KW"/>
</dbReference>
<dbReference type="Gene3D" id="2.60.270.60">
    <property type="match status" value="1"/>
</dbReference>
<dbReference type="InterPro" id="IPR018621">
    <property type="entry name" value="Atg31"/>
</dbReference>
<dbReference type="Pfam" id="PF09795">
    <property type="entry name" value="ATG31"/>
    <property type="match status" value="1"/>
</dbReference>
<gene>
    <name type="primary">CIS1</name>
    <name type="synonym">ATG31</name>
    <name type="ordered locus">CAGL0K11682g</name>
</gene>